<protein>
    <recommendedName>
        <fullName evidence="1">Uracil-DNA glycosylase</fullName>
        <shortName evidence="1">UDG</shortName>
        <ecNumber evidence="1">3.2.2.27</ecNumber>
    </recommendedName>
</protein>
<evidence type="ECO:0000255" key="1">
    <source>
        <dbReference type="HAMAP-Rule" id="MF_00148"/>
    </source>
</evidence>
<accession>A2RHW2</accession>
<feature type="chain" id="PRO_1000009906" description="Uracil-DNA glycosylase">
    <location>
        <begin position="1"/>
        <end position="219"/>
    </location>
</feature>
<feature type="active site" description="Proton acceptor" evidence="1">
    <location>
        <position position="62"/>
    </location>
</feature>
<gene>
    <name evidence="1" type="primary">ung</name>
    <name type="ordered locus">llmg_0244</name>
</gene>
<dbReference type="EC" id="3.2.2.27" evidence="1"/>
<dbReference type="EMBL" id="AM406671">
    <property type="protein sequence ID" value="CAL96850.1"/>
    <property type="molecule type" value="Genomic_DNA"/>
</dbReference>
<dbReference type="RefSeq" id="WP_011834325.1">
    <property type="nucleotide sequence ID" value="NC_009004.1"/>
</dbReference>
<dbReference type="SMR" id="A2RHW2"/>
<dbReference type="STRING" id="416870.llmg_0244"/>
<dbReference type="KEGG" id="llm:llmg_0244"/>
<dbReference type="eggNOG" id="COG0692">
    <property type="taxonomic scope" value="Bacteria"/>
</dbReference>
<dbReference type="HOGENOM" id="CLU_032162_3_1_9"/>
<dbReference type="OrthoDB" id="9804372at2"/>
<dbReference type="PhylomeDB" id="A2RHW2"/>
<dbReference type="Proteomes" id="UP000000364">
    <property type="component" value="Chromosome"/>
</dbReference>
<dbReference type="GO" id="GO:0005737">
    <property type="term" value="C:cytoplasm"/>
    <property type="evidence" value="ECO:0007669"/>
    <property type="project" value="UniProtKB-SubCell"/>
</dbReference>
<dbReference type="GO" id="GO:0004844">
    <property type="term" value="F:uracil DNA N-glycosylase activity"/>
    <property type="evidence" value="ECO:0007669"/>
    <property type="project" value="UniProtKB-UniRule"/>
</dbReference>
<dbReference type="GO" id="GO:0097510">
    <property type="term" value="P:base-excision repair, AP site formation via deaminated base removal"/>
    <property type="evidence" value="ECO:0007669"/>
    <property type="project" value="TreeGrafter"/>
</dbReference>
<dbReference type="CDD" id="cd10027">
    <property type="entry name" value="UDG-F1-like"/>
    <property type="match status" value="1"/>
</dbReference>
<dbReference type="Gene3D" id="3.40.470.10">
    <property type="entry name" value="Uracil-DNA glycosylase-like domain"/>
    <property type="match status" value="1"/>
</dbReference>
<dbReference type="HAMAP" id="MF_00148">
    <property type="entry name" value="UDG"/>
    <property type="match status" value="1"/>
</dbReference>
<dbReference type="InterPro" id="IPR002043">
    <property type="entry name" value="UDG_fam1"/>
</dbReference>
<dbReference type="InterPro" id="IPR018085">
    <property type="entry name" value="Ura-DNA_Glyclase_AS"/>
</dbReference>
<dbReference type="InterPro" id="IPR005122">
    <property type="entry name" value="Uracil-DNA_glycosylase-like"/>
</dbReference>
<dbReference type="InterPro" id="IPR036895">
    <property type="entry name" value="Uracil-DNA_glycosylase-like_sf"/>
</dbReference>
<dbReference type="NCBIfam" id="NF003588">
    <property type="entry name" value="PRK05254.1-1"/>
    <property type="match status" value="1"/>
</dbReference>
<dbReference type="NCBIfam" id="NF003589">
    <property type="entry name" value="PRK05254.1-2"/>
    <property type="match status" value="1"/>
</dbReference>
<dbReference type="NCBIfam" id="NF003592">
    <property type="entry name" value="PRK05254.1-5"/>
    <property type="match status" value="1"/>
</dbReference>
<dbReference type="NCBIfam" id="TIGR00628">
    <property type="entry name" value="ung"/>
    <property type="match status" value="1"/>
</dbReference>
<dbReference type="PANTHER" id="PTHR11264">
    <property type="entry name" value="URACIL-DNA GLYCOSYLASE"/>
    <property type="match status" value="1"/>
</dbReference>
<dbReference type="PANTHER" id="PTHR11264:SF0">
    <property type="entry name" value="URACIL-DNA GLYCOSYLASE"/>
    <property type="match status" value="1"/>
</dbReference>
<dbReference type="Pfam" id="PF03167">
    <property type="entry name" value="UDG"/>
    <property type="match status" value="1"/>
</dbReference>
<dbReference type="SMART" id="SM00986">
    <property type="entry name" value="UDG"/>
    <property type="match status" value="1"/>
</dbReference>
<dbReference type="SMART" id="SM00987">
    <property type="entry name" value="UreE_C"/>
    <property type="match status" value="1"/>
</dbReference>
<dbReference type="SUPFAM" id="SSF52141">
    <property type="entry name" value="Uracil-DNA glycosylase-like"/>
    <property type="match status" value="1"/>
</dbReference>
<dbReference type="PROSITE" id="PS00130">
    <property type="entry name" value="U_DNA_GLYCOSYLASE"/>
    <property type="match status" value="1"/>
</dbReference>
<name>UNG_LACLM</name>
<reference key="1">
    <citation type="journal article" date="2007" name="J. Bacteriol.">
        <title>The complete genome sequence of the lactic acid bacterial paradigm Lactococcus lactis subsp. cremoris MG1363.</title>
        <authorList>
            <person name="Wegmann U."/>
            <person name="O'Connell-Motherway M."/>
            <person name="Zomer A."/>
            <person name="Buist G."/>
            <person name="Shearman C."/>
            <person name="Canchaya C."/>
            <person name="Ventura M."/>
            <person name="Goesmann A."/>
            <person name="Gasson M.J."/>
            <person name="Kuipers O.P."/>
            <person name="van Sinderen D."/>
            <person name="Kok J."/>
        </authorList>
    </citation>
    <scope>NUCLEOTIDE SEQUENCE [LARGE SCALE GENOMIC DNA]</scope>
    <source>
        <strain>MG1363</strain>
    </source>
</reference>
<keyword id="KW-0963">Cytoplasm</keyword>
<keyword id="KW-0227">DNA damage</keyword>
<keyword id="KW-0234">DNA repair</keyword>
<keyword id="KW-0378">Hydrolase</keyword>
<comment type="function">
    <text evidence="1">Excises uracil residues from the DNA which can arise as a result of misincorporation of dUMP residues by DNA polymerase or due to deamination of cytosine.</text>
</comment>
<comment type="catalytic activity">
    <reaction evidence="1">
        <text>Hydrolyzes single-stranded DNA or mismatched double-stranded DNA and polynucleotides, releasing free uracil.</text>
        <dbReference type="EC" id="3.2.2.27"/>
    </reaction>
</comment>
<comment type="subcellular location">
    <subcellularLocation>
        <location evidence="1">Cytoplasm</location>
    </subcellularLocation>
</comment>
<comment type="similarity">
    <text evidence="1">Belongs to the uracil-DNA glycosylase (UDG) superfamily. UNG family.</text>
</comment>
<proteinExistence type="inferred from homology"/>
<sequence length="219" mass="24598">MKKTDWSQPLRNRLAEGYFPKMIEFINQTYQEGKIYPPENQIFRAIELTPLAQTKVIIVGQDPYPQPGKAQGLAFSYPATFKVNRPDSIVNIQKELREEGFSKEDSDLTAWAEQGVLLLNAVLTVPEFASNAHAGKIWEPLTDEIIKIASDDERPKVFILWGGFARKKAKLIDGSKHLILEAAHPSPLSASRGFFGSHPFSKTNDFLVQTGQSPIDWSK</sequence>
<organism>
    <name type="scientific">Lactococcus lactis subsp. cremoris (strain MG1363)</name>
    <dbReference type="NCBI Taxonomy" id="416870"/>
    <lineage>
        <taxon>Bacteria</taxon>
        <taxon>Bacillati</taxon>
        <taxon>Bacillota</taxon>
        <taxon>Bacilli</taxon>
        <taxon>Lactobacillales</taxon>
        <taxon>Streptococcaceae</taxon>
        <taxon>Lactococcus</taxon>
        <taxon>Lactococcus cremoris subsp. cremoris</taxon>
    </lineage>
</organism>